<feature type="chain" id="PRO_1000025048" description="UDP-2,3-diacylglucosamine hydrolase">
    <location>
        <begin position="1"/>
        <end position="250"/>
    </location>
</feature>
<feature type="binding site" evidence="1">
    <location>
        <position position="8"/>
    </location>
    <ligand>
        <name>Mn(2+)</name>
        <dbReference type="ChEBI" id="CHEBI:29035"/>
        <label>1</label>
    </ligand>
</feature>
<feature type="binding site" evidence="1">
    <location>
        <position position="10"/>
    </location>
    <ligand>
        <name>Mn(2+)</name>
        <dbReference type="ChEBI" id="CHEBI:29035"/>
        <label>1</label>
    </ligand>
</feature>
<feature type="binding site" evidence="1">
    <location>
        <position position="41"/>
    </location>
    <ligand>
        <name>Mn(2+)</name>
        <dbReference type="ChEBI" id="CHEBI:29035"/>
        <label>1</label>
    </ligand>
</feature>
<feature type="binding site" evidence="1">
    <location>
        <position position="41"/>
    </location>
    <ligand>
        <name>Mn(2+)</name>
        <dbReference type="ChEBI" id="CHEBI:29035"/>
        <label>2</label>
    </ligand>
</feature>
<feature type="binding site" evidence="1">
    <location>
        <begin position="79"/>
        <end position="80"/>
    </location>
    <ligand>
        <name>substrate</name>
    </ligand>
</feature>
<feature type="binding site" evidence="1">
    <location>
        <position position="79"/>
    </location>
    <ligand>
        <name>Mn(2+)</name>
        <dbReference type="ChEBI" id="CHEBI:29035"/>
        <label>2</label>
    </ligand>
</feature>
<feature type="binding site" evidence="1">
    <location>
        <position position="115"/>
    </location>
    <ligand>
        <name>Mn(2+)</name>
        <dbReference type="ChEBI" id="CHEBI:29035"/>
        <label>2</label>
    </ligand>
</feature>
<feature type="binding site" evidence="1">
    <location>
        <position position="123"/>
    </location>
    <ligand>
        <name>substrate</name>
    </ligand>
</feature>
<feature type="binding site" evidence="1">
    <location>
        <position position="165"/>
    </location>
    <ligand>
        <name>substrate</name>
    </ligand>
</feature>
<feature type="binding site" evidence="1">
    <location>
        <position position="168"/>
    </location>
    <ligand>
        <name>substrate</name>
    </ligand>
</feature>
<feature type="binding site" evidence="1">
    <location>
        <position position="196"/>
    </location>
    <ligand>
        <name>Mn(2+)</name>
        <dbReference type="ChEBI" id="CHEBI:29035"/>
        <label>2</label>
    </ligand>
</feature>
<feature type="binding site" evidence="1">
    <location>
        <position position="196"/>
    </location>
    <ligand>
        <name>substrate</name>
    </ligand>
</feature>
<feature type="binding site" evidence="1">
    <location>
        <position position="198"/>
    </location>
    <ligand>
        <name>Mn(2+)</name>
        <dbReference type="ChEBI" id="CHEBI:29035"/>
        <label>1</label>
    </ligand>
</feature>
<sequence length="250" mass="29061">MSILFISDVHLSTKSPYITDGFLRFLSYRAMRAKALYILGDLFETWLGDDDYNLLHINIAKALKALNQRRISCYFIHGNHDFLLGQRYARACGMTLLSSNQVLKLASGKKIIILHGDILCANDNSYQLFRKYLRHIIVQRLFLSLPLSIRSRIFSAIRSCCVQHTKYKSKKKLNINLKIATDMLIQNNADIMIHGHTHQPAIHKIYRSKKNVFRIIVLGCWNKYGSMIEVNEKNNDILFTEFPLYEITKY</sequence>
<comment type="function">
    <text evidence="1">Hydrolyzes the pyrophosphate bond of UDP-2,3-diacylglucosamine to yield 2,3-diacylglucosamine 1-phosphate (lipid X) and UMP by catalyzing the attack of water at the alpha-P atom. Involved in the biosynthesis of lipid A, a phosphorylated glycolipid that anchors the lipopolysaccharide to the outer membrane of the cell.</text>
</comment>
<comment type="catalytic activity">
    <reaction evidence="1">
        <text>UDP-2-N,3-O-bis[(3R)-3-hydroxytetradecanoyl]-alpha-D-glucosamine + H2O = 2-N,3-O-bis[(3R)-3-hydroxytetradecanoyl]-alpha-D-glucosaminyl 1-phosphate + UMP + 2 H(+)</text>
        <dbReference type="Rhea" id="RHEA:25213"/>
        <dbReference type="ChEBI" id="CHEBI:15377"/>
        <dbReference type="ChEBI" id="CHEBI:15378"/>
        <dbReference type="ChEBI" id="CHEBI:57865"/>
        <dbReference type="ChEBI" id="CHEBI:57957"/>
        <dbReference type="ChEBI" id="CHEBI:78847"/>
        <dbReference type="EC" id="3.6.1.54"/>
    </reaction>
</comment>
<comment type="cofactor">
    <cofactor evidence="1">
        <name>Mn(2+)</name>
        <dbReference type="ChEBI" id="CHEBI:29035"/>
    </cofactor>
    <text evidence="1">Binds 2 Mn(2+) ions per subunit in a binuclear metal center.</text>
</comment>
<comment type="pathway">
    <text evidence="1">Glycolipid biosynthesis; lipid IV(A) biosynthesis; lipid IV(A) from (3R)-3-hydroxytetradecanoyl-[acyl-carrier-protein] and UDP-N-acetyl-alpha-D-glucosamine: step 4/6.</text>
</comment>
<comment type="subcellular location">
    <subcellularLocation>
        <location evidence="1">Cell inner membrane</location>
        <topology evidence="1">Peripheral membrane protein</topology>
        <orientation evidence="1">Cytoplasmic side</orientation>
    </subcellularLocation>
</comment>
<comment type="similarity">
    <text evidence="1">Belongs to the LpxH family.</text>
</comment>
<name>LPXH_BLOPB</name>
<dbReference type="EC" id="3.6.1.54" evidence="1"/>
<dbReference type="EMBL" id="CP000016">
    <property type="protein sequence ID" value="AAZ40942.1"/>
    <property type="molecule type" value="Genomic_DNA"/>
</dbReference>
<dbReference type="RefSeq" id="WP_011282849.1">
    <property type="nucleotide sequence ID" value="NC_007292.1"/>
</dbReference>
<dbReference type="SMR" id="Q493A2"/>
<dbReference type="STRING" id="291272.BPEN_311"/>
<dbReference type="KEGG" id="bpn:BPEN_311"/>
<dbReference type="eggNOG" id="COG2908">
    <property type="taxonomic scope" value="Bacteria"/>
</dbReference>
<dbReference type="HOGENOM" id="CLU_074586_0_0_6"/>
<dbReference type="OrthoDB" id="9783283at2"/>
<dbReference type="UniPathway" id="UPA00359">
    <property type="reaction ID" value="UER00480"/>
</dbReference>
<dbReference type="Proteomes" id="UP000007794">
    <property type="component" value="Chromosome"/>
</dbReference>
<dbReference type="GO" id="GO:0005737">
    <property type="term" value="C:cytoplasm"/>
    <property type="evidence" value="ECO:0007669"/>
    <property type="project" value="InterPro"/>
</dbReference>
<dbReference type="GO" id="GO:0019897">
    <property type="term" value="C:extrinsic component of plasma membrane"/>
    <property type="evidence" value="ECO:0007669"/>
    <property type="project" value="UniProtKB-UniRule"/>
</dbReference>
<dbReference type="GO" id="GO:0030145">
    <property type="term" value="F:manganese ion binding"/>
    <property type="evidence" value="ECO:0007669"/>
    <property type="project" value="UniProtKB-UniRule"/>
</dbReference>
<dbReference type="GO" id="GO:0008758">
    <property type="term" value="F:UDP-2,3-diacylglucosamine hydrolase activity"/>
    <property type="evidence" value="ECO:0007669"/>
    <property type="project" value="UniProtKB-UniRule"/>
</dbReference>
<dbReference type="GO" id="GO:0009245">
    <property type="term" value="P:lipid A biosynthetic process"/>
    <property type="evidence" value="ECO:0007669"/>
    <property type="project" value="UniProtKB-UniRule"/>
</dbReference>
<dbReference type="CDD" id="cd07398">
    <property type="entry name" value="MPP_YbbF-LpxH"/>
    <property type="match status" value="1"/>
</dbReference>
<dbReference type="Gene3D" id="3.60.21.10">
    <property type="match status" value="1"/>
</dbReference>
<dbReference type="HAMAP" id="MF_00575">
    <property type="entry name" value="LpxH"/>
    <property type="match status" value="1"/>
</dbReference>
<dbReference type="InterPro" id="IPR004843">
    <property type="entry name" value="Calcineurin-like_PHP_ApaH"/>
</dbReference>
<dbReference type="InterPro" id="IPR043461">
    <property type="entry name" value="LpxH-like"/>
</dbReference>
<dbReference type="InterPro" id="IPR029052">
    <property type="entry name" value="Metallo-depent_PP-like"/>
</dbReference>
<dbReference type="InterPro" id="IPR010138">
    <property type="entry name" value="UDP-diacylglucosamine_Hdrlase"/>
</dbReference>
<dbReference type="NCBIfam" id="TIGR01854">
    <property type="entry name" value="lipid_A_lpxH"/>
    <property type="match status" value="1"/>
</dbReference>
<dbReference type="NCBIfam" id="NF003743">
    <property type="entry name" value="PRK05340.1"/>
    <property type="match status" value="1"/>
</dbReference>
<dbReference type="PANTHER" id="PTHR34990:SF1">
    <property type="entry name" value="UDP-2,3-DIACYLGLUCOSAMINE HYDROLASE"/>
    <property type="match status" value="1"/>
</dbReference>
<dbReference type="PANTHER" id="PTHR34990">
    <property type="entry name" value="UDP-2,3-DIACYLGLUCOSAMINE HYDROLASE-RELATED"/>
    <property type="match status" value="1"/>
</dbReference>
<dbReference type="Pfam" id="PF00149">
    <property type="entry name" value="Metallophos"/>
    <property type="match status" value="1"/>
</dbReference>
<dbReference type="SUPFAM" id="SSF56300">
    <property type="entry name" value="Metallo-dependent phosphatases"/>
    <property type="match status" value="1"/>
</dbReference>
<proteinExistence type="inferred from homology"/>
<keyword id="KW-0997">Cell inner membrane</keyword>
<keyword id="KW-1003">Cell membrane</keyword>
<keyword id="KW-0378">Hydrolase</keyword>
<keyword id="KW-0441">Lipid A biosynthesis</keyword>
<keyword id="KW-0444">Lipid biosynthesis</keyword>
<keyword id="KW-0443">Lipid metabolism</keyword>
<keyword id="KW-0464">Manganese</keyword>
<keyword id="KW-0472">Membrane</keyword>
<keyword id="KW-0479">Metal-binding</keyword>
<keyword id="KW-1185">Reference proteome</keyword>
<reference key="1">
    <citation type="journal article" date="2005" name="Genome Res.">
        <title>Genome sequence of Blochmannia pennsylvanicus indicates parallel evolutionary trends among bacterial mutualists of insects.</title>
        <authorList>
            <person name="Degnan P.H."/>
            <person name="Lazarus A.B."/>
            <person name="Wernegreen J.J."/>
        </authorList>
    </citation>
    <scope>NUCLEOTIDE SEQUENCE [LARGE SCALE GENOMIC DNA]</scope>
    <source>
        <strain>BPEN</strain>
    </source>
</reference>
<evidence type="ECO:0000255" key="1">
    <source>
        <dbReference type="HAMAP-Rule" id="MF_00575"/>
    </source>
</evidence>
<accession>Q493A2</accession>
<protein>
    <recommendedName>
        <fullName evidence="1">UDP-2,3-diacylglucosamine hydrolase</fullName>
        <ecNumber evidence="1">3.6.1.54</ecNumber>
    </recommendedName>
    <alternativeName>
        <fullName evidence="1">UDP-2,3-diacylglucosamine diphosphatase</fullName>
    </alternativeName>
</protein>
<gene>
    <name evidence="1" type="primary">lpxH</name>
    <name type="ordered locus">BPEN_311</name>
</gene>
<organism>
    <name type="scientific">Blochmanniella pennsylvanica (strain BPEN)</name>
    <dbReference type="NCBI Taxonomy" id="291272"/>
    <lineage>
        <taxon>Bacteria</taxon>
        <taxon>Pseudomonadati</taxon>
        <taxon>Pseudomonadota</taxon>
        <taxon>Gammaproteobacteria</taxon>
        <taxon>Enterobacterales</taxon>
        <taxon>Enterobacteriaceae</taxon>
        <taxon>ant endosymbionts</taxon>
        <taxon>Candidatus Blochmanniella</taxon>
    </lineage>
</organism>